<comment type="function">
    <text evidence="1">Negatively regulates the transcription of the flagellar master operon flhDC by binding to the upstream region of the operon.</text>
</comment>
<comment type="similarity">
    <text evidence="2">Belongs to the LysR transcriptional regulatory family.</text>
</comment>
<name>HDFR_YERP3</name>
<protein>
    <recommendedName>
        <fullName evidence="1">HTH-type transcriptional regulator HdfR</fullName>
    </recommendedName>
    <alternativeName>
        <fullName evidence="1">H-NS-dependent flhDC regulator</fullName>
    </alternativeName>
</protein>
<keyword id="KW-0238">DNA-binding</keyword>
<keyword id="KW-0678">Repressor</keyword>
<keyword id="KW-0804">Transcription</keyword>
<keyword id="KW-0805">Transcription regulation</keyword>
<sequence length="293" mass="33933">MDTELLKTFLEVSRTRHFGRAAESLYLTQSAVSFRIRQLENQLGANLFTRHRNNIRLTPAGERLVPYAEMLLNTWRLAKKEVIHSLQHTELSIGATASLWEAYLTPWLQQLYEQQEELRLEARIALRNSLVKQLHERQLDLLITTEPPKMDELACLLLGHFSLRLYSSFSLDLPKEDDTPNEHKNASEVPYIKLEWGADFHQQENRLLDSEQAPILTTTSAHLTRQLLETTGGCAFLPEHWQKEYPQLVIHPDIPPIVRPLYAVWLQNSDQQALIRQLLKTPMNNATQSVTRE</sequence>
<reference key="1">
    <citation type="journal article" date="2007" name="PLoS Genet.">
        <title>The complete genome sequence of Yersinia pseudotuberculosis IP31758, the causative agent of Far East scarlet-like fever.</title>
        <authorList>
            <person name="Eppinger M."/>
            <person name="Rosovitz M.J."/>
            <person name="Fricke W.F."/>
            <person name="Rasko D.A."/>
            <person name="Kokorina G."/>
            <person name="Fayolle C."/>
            <person name="Lindler L.E."/>
            <person name="Carniel E."/>
            <person name="Ravel J."/>
        </authorList>
    </citation>
    <scope>NUCLEOTIDE SEQUENCE [LARGE SCALE GENOMIC DNA]</scope>
    <source>
        <strain>IP 31758</strain>
    </source>
</reference>
<proteinExistence type="inferred from homology"/>
<accession>A7FD20</accession>
<evidence type="ECO:0000255" key="1">
    <source>
        <dbReference type="HAMAP-Rule" id="MF_01233"/>
    </source>
</evidence>
<evidence type="ECO:0000305" key="2"/>
<organism>
    <name type="scientific">Yersinia pseudotuberculosis serotype O:1b (strain IP 31758)</name>
    <dbReference type="NCBI Taxonomy" id="349747"/>
    <lineage>
        <taxon>Bacteria</taxon>
        <taxon>Pseudomonadati</taxon>
        <taxon>Pseudomonadota</taxon>
        <taxon>Gammaproteobacteria</taxon>
        <taxon>Enterobacterales</taxon>
        <taxon>Yersiniaceae</taxon>
        <taxon>Yersinia</taxon>
    </lineage>
</organism>
<dbReference type="EMBL" id="CP000720">
    <property type="protein sequence ID" value="ABS49226.1"/>
    <property type="molecule type" value="Genomic_DNA"/>
</dbReference>
<dbReference type="RefSeq" id="WP_002212020.1">
    <property type="nucleotide sequence ID" value="NC_009708.1"/>
</dbReference>
<dbReference type="SMR" id="A7FD20"/>
<dbReference type="GeneID" id="57974802"/>
<dbReference type="KEGG" id="ypi:YpsIP31758_0150"/>
<dbReference type="HOGENOM" id="CLU_039613_8_2_6"/>
<dbReference type="Proteomes" id="UP000002412">
    <property type="component" value="Chromosome"/>
</dbReference>
<dbReference type="GO" id="GO:0003677">
    <property type="term" value="F:DNA binding"/>
    <property type="evidence" value="ECO:0007669"/>
    <property type="project" value="UniProtKB-KW"/>
</dbReference>
<dbReference type="GO" id="GO:0003700">
    <property type="term" value="F:DNA-binding transcription factor activity"/>
    <property type="evidence" value="ECO:0007669"/>
    <property type="project" value="UniProtKB-UniRule"/>
</dbReference>
<dbReference type="GO" id="GO:0045892">
    <property type="term" value="P:negative regulation of DNA-templated transcription"/>
    <property type="evidence" value="ECO:0007669"/>
    <property type="project" value="UniProtKB-UniRule"/>
</dbReference>
<dbReference type="CDD" id="cd05466">
    <property type="entry name" value="PBP2_LTTR_substrate"/>
    <property type="match status" value="1"/>
</dbReference>
<dbReference type="FunFam" id="1.10.10.10:FF:000001">
    <property type="entry name" value="LysR family transcriptional regulator"/>
    <property type="match status" value="1"/>
</dbReference>
<dbReference type="Gene3D" id="3.40.190.10">
    <property type="entry name" value="Periplasmic binding protein-like II"/>
    <property type="match status" value="2"/>
</dbReference>
<dbReference type="Gene3D" id="1.10.10.10">
    <property type="entry name" value="Winged helix-like DNA-binding domain superfamily/Winged helix DNA-binding domain"/>
    <property type="match status" value="1"/>
</dbReference>
<dbReference type="HAMAP" id="MF_01233">
    <property type="entry name" value="HTH_type_HdfR"/>
    <property type="match status" value="1"/>
</dbReference>
<dbReference type="InterPro" id="IPR050176">
    <property type="entry name" value="LTTR"/>
</dbReference>
<dbReference type="InterPro" id="IPR005119">
    <property type="entry name" value="LysR_subst-bd"/>
</dbReference>
<dbReference type="InterPro" id="IPR020890">
    <property type="entry name" value="Tscrpt_reg_HTH_HdfR"/>
</dbReference>
<dbReference type="InterPro" id="IPR000847">
    <property type="entry name" value="Tscrpt_reg_HTH_LysR"/>
</dbReference>
<dbReference type="InterPro" id="IPR036388">
    <property type="entry name" value="WH-like_DNA-bd_sf"/>
</dbReference>
<dbReference type="InterPro" id="IPR036390">
    <property type="entry name" value="WH_DNA-bd_sf"/>
</dbReference>
<dbReference type="NCBIfam" id="NF002946">
    <property type="entry name" value="PRK03601.1"/>
    <property type="match status" value="1"/>
</dbReference>
<dbReference type="PANTHER" id="PTHR30579:SF8">
    <property type="entry name" value="HTH-TYPE TRANSCRIPTIONAL REGULATOR HDFR"/>
    <property type="match status" value="1"/>
</dbReference>
<dbReference type="PANTHER" id="PTHR30579">
    <property type="entry name" value="TRANSCRIPTIONAL REGULATOR"/>
    <property type="match status" value="1"/>
</dbReference>
<dbReference type="Pfam" id="PF00126">
    <property type="entry name" value="HTH_1"/>
    <property type="match status" value="1"/>
</dbReference>
<dbReference type="Pfam" id="PF03466">
    <property type="entry name" value="LysR_substrate"/>
    <property type="match status" value="1"/>
</dbReference>
<dbReference type="PRINTS" id="PR00039">
    <property type="entry name" value="HTHLYSR"/>
</dbReference>
<dbReference type="SUPFAM" id="SSF53850">
    <property type="entry name" value="Periplasmic binding protein-like II"/>
    <property type="match status" value="1"/>
</dbReference>
<dbReference type="SUPFAM" id="SSF46785">
    <property type="entry name" value="Winged helix' DNA-binding domain"/>
    <property type="match status" value="1"/>
</dbReference>
<dbReference type="PROSITE" id="PS50931">
    <property type="entry name" value="HTH_LYSR"/>
    <property type="match status" value="1"/>
</dbReference>
<feature type="chain" id="PRO_1000066902" description="HTH-type transcriptional regulator HdfR">
    <location>
        <begin position="1"/>
        <end position="293"/>
    </location>
</feature>
<feature type="domain" description="HTH lysR-type" evidence="1">
    <location>
        <begin position="1"/>
        <end position="58"/>
    </location>
</feature>
<feature type="DNA-binding region" description="H-T-H motif" evidence="1">
    <location>
        <begin position="18"/>
        <end position="37"/>
    </location>
</feature>
<gene>
    <name evidence="1" type="primary">hdfR</name>
    <name type="ordered locus">YpsIP31758_0150</name>
</gene>